<reference key="1">
    <citation type="journal article" date="2007" name="Nat. Genet.">
        <title>Comparative genomic analysis of three Leishmania species that cause diverse human disease.</title>
        <authorList>
            <person name="Peacock C.S."/>
            <person name="Seeger K."/>
            <person name="Harris D."/>
            <person name="Murphy L."/>
            <person name="Ruiz J.C."/>
            <person name="Quail M.A."/>
            <person name="Peters N."/>
            <person name="Adlem E."/>
            <person name="Tivey A."/>
            <person name="Aslett M."/>
            <person name="Kerhornou A."/>
            <person name="Ivens A."/>
            <person name="Fraser A."/>
            <person name="Rajandream M.-A."/>
            <person name="Carver T."/>
            <person name="Norbertczak H."/>
            <person name="Chillingworth T."/>
            <person name="Hance Z."/>
            <person name="Jagels K."/>
            <person name="Moule S."/>
            <person name="Ormond D."/>
            <person name="Rutter S."/>
            <person name="Sqaures R."/>
            <person name="Whitehead S."/>
            <person name="Rabbinowitsch E."/>
            <person name="Arrowsmith C."/>
            <person name="White B."/>
            <person name="Thurston S."/>
            <person name="Bringaud F."/>
            <person name="Baldauf S.L."/>
            <person name="Faulconbridge A."/>
            <person name="Jeffares D."/>
            <person name="Depledge D.P."/>
            <person name="Oyola S.O."/>
            <person name="Hilley J.D."/>
            <person name="Brito L.O."/>
            <person name="Tosi L.R.O."/>
            <person name="Barrell B."/>
            <person name="Cruz A.K."/>
            <person name="Mottram J.C."/>
            <person name="Smith D.F."/>
            <person name="Berriman M."/>
        </authorList>
    </citation>
    <scope>NUCLEOTIDE SEQUENCE [LARGE SCALE GENOMIC DNA]</scope>
    <source>
        <strain>MHOM/BR/75/M2904</strain>
    </source>
</reference>
<proteinExistence type="inferred from homology"/>
<organism>
    <name type="scientific">Leishmania braziliensis</name>
    <dbReference type="NCBI Taxonomy" id="5660"/>
    <lineage>
        <taxon>Eukaryota</taxon>
        <taxon>Discoba</taxon>
        <taxon>Euglenozoa</taxon>
        <taxon>Kinetoplastea</taxon>
        <taxon>Metakinetoplastina</taxon>
        <taxon>Trypanosomatida</taxon>
        <taxon>Trypanosomatidae</taxon>
        <taxon>Leishmaniinae</taxon>
        <taxon>Leishmania</taxon>
        <taxon>Leishmania braziliensis species complex</taxon>
    </lineage>
</organism>
<protein>
    <recommendedName>
        <fullName evidence="2">Adenylosuccinate synthetase</fullName>
        <shortName evidence="2">AMPSase</shortName>
        <shortName evidence="2">AdSS</shortName>
        <ecNumber evidence="2">6.3.4.4</ecNumber>
    </recommendedName>
    <alternativeName>
        <fullName evidence="2">IMP--aspartate ligase</fullName>
    </alternativeName>
</protein>
<keyword id="KW-0963">Cytoplasm</keyword>
<keyword id="KW-0342">GTP-binding</keyword>
<keyword id="KW-0436">Ligase</keyword>
<keyword id="KW-0460">Magnesium</keyword>
<keyword id="KW-0479">Metal-binding</keyword>
<keyword id="KW-0547">Nucleotide-binding</keyword>
<keyword id="KW-0658">Purine biosynthesis</keyword>
<keyword id="KW-1185">Reference proteome</keyword>
<comment type="function">
    <text evidence="1">Plays an important role in the salvage pathway for purine nucleotide biosynthesis. Catalyzes the first committed step in the biosynthesis of AMP from IMP (By similarity).</text>
</comment>
<comment type="catalytic activity">
    <reaction evidence="2">
        <text>IMP + L-aspartate + GTP = N(6)-(1,2-dicarboxyethyl)-AMP + GDP + phosphate + 2 H(+)</text>
        <dbReference type="Rhea" id="RHEA:15753"/>
        <dbReference type="ChEBI" id="CHEBI:15378"/>
        <dbReference type="ChEBI" id="CHEBI:29991"/>
        <dbReference type="ChEBI" id="CHEBI:37565"/>
        <dbReference type="ChEBI" id="CHEBI:43474"/>
        <dbReference type="ChEBI" id="CHEBI:57567"/>
        <dbReference type="ChEBI" id="CHEBI:58053"/>
        <dbReference type="ChEBI" id="CHEBI:58189"/>
        <dbReference type="EC" id="6.3.4.4"/>
    </reaction>
</comment>
<comment type="cofactor">
    <cofactor evidence="2">
        <name>Mg(2+)</name>
        <dbReference type="ChEBI" id="CHEBI:18420"/>
    </cofactor>
    <text evidence="2">Binds 1 Mg(2+) ion per subunit.</text>
</comment>
<comment type="pathway">
    <text evidence="2">Purine metabolism; AMP biosynthesis via de novo pathway; AMP from IMP: step 1/2.</text>
</comment>
<comment type="subunit">
    <text evidence="2">Homodimer.</text>
</comment>
<comment type="subcellular location">
    <subcellularLocation>
        <location evidence="2">Cytoplasm</location>
    </subcellularLocation>
</comment>
<comment type="miscellaneous">
    <text>Parasitic protozoa lack the de novo purine biosynthesis pathway and rely exclusively on the salvage pathway for their purine nucleotide requirements.</text>
</comment>
<comment type="similarity">
    <text evidence="2">Belongs to the adenylosuccinate synthetase family.</text>
</comment>
<evidence type="ECO:0000250" key="1"/>
<evidence type="ECO:0000255" key="2">
    <source>
        <dbReference type="HAMAP-Rule" id="MF_03125"/>
    </source>
</evidence>
<evidence type="ECO:0000256" key="3">
    <source>
        <dbReference type="SAM" id="MobiDB-lite"/>
    </source>
</evidence>
<sequence>MPVRRYGGRYNNSSSGVSNALSSSSTAGLRPSPSSRENSTPLSTHHDPAFLSTNHAKNEGGLCQKHHVRFREPSVEVEVEIMDDEPSRGLQKPPSRARHAADANNNSASAQCNTTRTSDYTFYTNEDQKKVYEALRSLRPLPELQEPRRVKEYSEVSIKESLYRIVEAHDVIMVAGAFFGDEGKGKTVDAVAHHPLCTCIARVNSGENAGHTVYDKAGRKFVFNLAPSGLLLPGKRNYIGPECVMDPVSFMEKEIIQLISAGIDYHDRLFIGNVCIVTPYHKLLDLLGSAANSSTLKGMAPVHGSKVMKRGIRLDHIFNDDETLRKRLEKDMETYLGLLKVKNLSDADVVRLCREENSDGVLRVPDYVIAFAQAKEKVKFLMNLYHDRVRNNPDFPARCDVIYELRAAVLRGEKVLLEGPQSYWLSNARTKFWESTTSADTTAAGLLAASQLNFQQFKSVVLNVHKAPGSSRVGIGACPSSFVPQDFFSAQNIKTLHDLPPATCANFEAIQRTLFRDGFPYSNDKAKHNGIMAPVEYSDETGDYNIGVAMAIASAQHHGECGAVTKKPRVCGFFDCVLQHEVNSIQGPYLTISALDRGDEYDKVGVTIAYVYYNPEGKQVNVNGHVYKNGDIIRAGDPVPSESALYHCHPIVKLIDGWRDNPIAAAKRRRNTPLPRGLCELLSTIEYFTNCKVLSIGNGPNGDDIIYLRQ</sequence>
<gene>
    <name type="ORF">LbrM13_V2.0970</name>
    <name type="ORF">LbrM_13_0970</name>
</gene>
<name>PURA_LEIBR</name>
<accession>A4H7A3</accession>
<dbReference type="EC" id="6.3.4.4" evidence="2"/>
<dbReference type="EMBL" id="FR798987">
    <property type="protein sequence ID" value="CAM45660.1"/>
    <property type="molecule type" value="Genomic_DNA"/>
</dbReference>
<dbReference type="RefSeq" id="XP_001563239.1">
    <property type="nucleotide sequence ID" value="XM_001563189.1"/>
</dbReference>
<dbReference type="SMR" id="A4H7A3"/>
<dbReference type="FunCoup" id="A4H7A3">
    <property type="interactions" value="395"/>
</dbReference>
<dbReference type="STRING" id="5660.A4H7A3"/>
<dbReference type="GeneID" id="5413734"/>
<dbReference type="KEGG" id="lbz:LBRM_13_0970"/>
<dbReference type="VEuPathDB" id="TriTrypDB:LbrM.13.0970"/>
<dbReference type="InParanoid" id="A4H7A3"/>
<dbReference type="OMA" id="YIGPECV"/>
<dbReference type="UniPathway" id="UPA00075">
    <property type="reaction ID" value="UER00335"/>
</dbReference>
<dbReference type="Proteomes" id="UP000007258">
    <property type="component" value="Chromosome 13"/>
</dbReference>
<dbReference type="GO" id="GO:0005737">
    <property type="term" value="C:cytoplasm"/>
    <property type="evidence" value="ECO:0007669"/>
    <property type="project" value="UniProtKB-SubCell"/>
</dbReference>
<dbReference type="GO" id="GO:0004019">
    <property type="term" value="F:adenylosuccinate synthase activity"/>
    <property type="evidence" value="ECO:0007669"/>
    <property type="project" value="UniProtKB-UniRule"/>
</dbReference>
<dbReference type="GO" id="GO:0005525">
    <property type="term" value="F:GTP binding"/>
    <property type="evidence" value="ECO:0007669"/>
    <property type="project" value="UniProtKB-UniRule"/>
</dbReference>
<dbReference type="GO" id="GO:0000287">
    <property type="term" value="F:magnesium ion binding"/>
    <property type="evidence" value="ECO:0007669"/>
    <property type="project" value="UniProtKB-UniRule"/>
</dbReference>
<dbReference type="GO" id="GO:0044208">
    <property type="term" value="P:'de novo' AMP biosynthetic process"/>
    <property type="evidence" value="ECO:0007669"/>
    <property type="project" value="UniProtKB-UniRule"/>
</dbReference>
<dbReference type="GO" id="GO:0046040">
    <property type="term" value="P:IMP metabolic process"/>
    <property type="evidence" value="ECO:0007669"/>
    <property type="project" value="TreeGrafter"/>
</dbReference>
<dbReference type="FunFam" id="1.10.300.10:FF:000005">
    <property type="entry name" value="Adenylosuccinate synthetase"/>
    <property type="match status" value="1"/>
</dbReference>
<dbReference type="FunFam" id="3.90.170.10:FF:000003">
    <property type="entry name" value="Adenylosuccinate synthetase"/>
    <property type="match status" value="1"/>
</dbReference>
<dbReference type="Gene3D" id="3.40.440.10">
    <property type="entry name" value="Adenylosuccinate Synthetase, subunit A, domain 1"/>
    <property type="match status" value="1"/>
</dbReference>
<dbReference type="Gene3D" id="1.10.300.10">
    <property type="entry name" value="Adenylosuccinate Synthetase, subunit A, domain 2"/>
    <property type="match status" value="1"/>
</dbReference>
<dbReference type="Gene3D" id="3.90.170.10">
    <property type="entry name" value="Adenylosuccinate Synthetase, subunit A, domain 3"/>
    <property type="match status" value="1"/>
</dbReference>
<dbReference type="HAMAP" id="MF_00011">
    <property type="entry name" value="Adenylosucc_synth"/>
    <property type="match status" value="1"/>
</dbReference>
<dbReference type="InterPro" id="IPR018220">
    <property type="entry name" value="Adenylosuccin_syn_GTP-bd"/>
</dbReference>
<dbReference type="InterPro" id="IPR042109">
    <property type="entry name" value="Adenylosuccinate_synth_dom1"/>
</dbReference>
<dbReference type="InterPro" id="IPR042110">
    <property type="entry name" value="Adenylosuccinate_synth_dom2"/>
</dbReference>
<dbReference type="InterPro" id="IPR042111">
    <property type="entry name" value="Adenylosuccinate_synth_dom3"/>
</dbReference>
<dbReference type="InterPro" id="IPR001114">
    <property type="entry name" value="Adenylosuccinate_synthetase"/>
</dbReference>
<dbReference type="InterPro" id="IPR027417">
    <property type="entry name" value="P-loop_NTPase"/>
</dbReference>
<dbReference type="PANTHER" id="PTHR11846">
    <property type="entry name" value="ADENYLOSUCCINATE SYNTHETASE"/>
    <property type="match status" value="1"/>
</dbReference>
<dbReference type="PANTHER" id="PTHR11846:SF0">
    <property type="entry name" value="ADENYLOSUCCINATE SYNTHETASE"/>
    <property type="match status" value="1"/>
</dbReference>
<dbReference type="Pfam" id="PF00709">
    <property type="entry name" value="Adenylsucc_synt"/>
    <property type="match status" value="1"/>
</dbReference>
<dbReference type="SMART" id="SM00788">
    <property type="entry name" value="Adenylsucc_synt"/>
    <property type="match status" value="1"/>
</dbReference>
<dbReference type="SUPFAM" id="SSF52540">
    <property type="entry name" value="P-loop containing nucleoside triphosphate hydrolases"/>
    <property type="match status" value="1"/>
</dbReference>
<dbReference type="PROSITE" id="PS01266">
    <property type="entry name" value="ADENYLOSUCCIN_SYN_1"/>
    <property type="match status" value="1"/>
</dbReference>
<feature type="chain" id="PRO_0000399301" description="Adenylosuccinate synthetase">
    <location>
        <begin position="1"/>
        <end position="710"/>
    </location>
</feature>
<feature type="region of interest" description="Disordered" evidence="3">
    <location>
        <begin position="1"/>
        <end position="57"/>
    </location>
</feature>
<feature type="region of interest" description="Disordered" evidence="3">
    <location>
        <begin position="82"/>
        <end position="112"/>
    </location>
</feature>
<feature type="compositionally biased region" description="Low complexity" evidence="3">
    <location>
        <begin position="11"/>
        <end position="25"/>
    </location>
</feature>
<feature type="compositionally biased region" description="Polar residues" evidence="3">
    <location>
        <begin position="32"/>
        <end position="43"/>
    </location>
</feature>
<feature type="active site" description="Proton acceptor" evidence="2">
    <location>
        <position position="181"/>
    </location>
</feature>
<feature type="active site" description="Proton donor" evidence="2">
    <location>
        <position position="211"/>
    </location>
</feature>
<feature type="binding site" evidence="2">
    <location>
        <begin position="180"/>
        <end position="186"/>
    </location>
    <ligand>
        <name>GTP</name>
        <dbReference type="ChEBI" id="CHEBI:37565"/>
    </ligand>
</feature>
<feature type="binding site" description="in other chain" evidence="2">
    <location>
        <begin position="181"/>
        <end position="184"/>
    </location>
    <ligand>
        <name>IMP</name>
        <dbReference type="ChEBI" id="CHEBI:58053"/>
        <note>ligand shared between dimeric partners</note>
    </ligand>
</feature>
<feature type="binding site" evidence="2">
    <location>
        <position position="181"/>
    </location>
    <ligand>
        <name>Mg(2+)</name>
        <dbReference type="ChEBI" id="CHEBI:18420"/>
    </ligand>
</feature>
<feature type="binding site" description="in other chain" evidence="2">
    <location>
        <begin position="208"/>
        <end position="211"/>
    </location>
    <ligand>
        <name>IMP</name>
        <dbReference type="ChEBI" id="CHEBI:58053"/>
        <note>ligand shared between dimeric partners</note>
    </ligand>
</feature>
<feature type="binding site" evidence="2">
    <location>
        <begin position="210"/>
        <end position="212"/>
    </location>
    <ligand>
        <name>GTP</name>
        <dbReference type="ChEBI" id="CHEBI:37565"/>
    </ligand>
</feature>
<feature type="binding site" evidence="2">
    <location>
        <position position="210"/>
    </location>
    <ligand>
        <name>Mg(2+)</name>
        <dbReference type="ChEBI" id="CHEBI:18420"/>
    </ligand>
</feature>
<feature type="binding site" description="in other chain" evidence="2">
    <location>
        <position position="295"/>
    </location>
    <ligand>
        <name>IMP</name>
        <dbReference type="ChEBI" id="CHEBI:58053"/>
        <note>ligand shared between dimeric partners</note>
    </ligand>
</feature>
<feature type="binding site" evidence="2">
    <location>
        <position position="309"/>
    </location>
    <ligand>
        <name>IMP</name>
        <dbReference type="ChEBI" id="CHEBI:58053"/>
        <note>ligand shared between dimeric partners</note>
    </ligand>
</feature>
<feature type="binding site" description="in other chain" evidence="2">
    <location>
        <position position="421"/>
    </location>
    <ligand>
        <name>IMP</name>
        <dbReference type="ChEBI" id="CHEBI:58053"/>
        <note>ligand shared between dimeric partners</note>
    </ligand>
</feature>
<feature type="binding site" description="in other chain" evidence="2">
    <location>
        <position position="437"/>
    </location>
    <ligand>
        <name>IMP</name>
        <dbReference type="ChEBI" id="CHEBI:58053"/>
        <note>ligand shared between dimeric partners</note>
    </ligand>
</feature>
<feature type="binding site" evidence="2">
    <location>
        <begin position="563"/>
        <end position="569"/>
    </location>
    <ligand>
        <name>substrate</name>
    </ligand>
</feature>
<feature type="binding site" description="in other chain" evidence="2">
    <location>
        <position position="567"/>
    </location>
    <ligand>
        <name>IMP</name>
        <dbReference type="ChEBI" id="CHEBI:58053"/>
        <note>ligand shared between dimeric partners</note>
    </ligand>
</feature>
<feature type="binding site" evidence="2">
    <location>
        <position position="569"/>
    </location>
    <ligand>
        <name>GTP</name>
        <dbReference type="ChEBI" id="CHEBI:37565"/>
    </ligand>
</feature>
<feature type="binding site" evidence="2">
    <location>
        <begin position="697"/>
        <end position="699"/>
    </location>
    <ligand>
        <name>GTP</name>
        <dbReference type="ChEBI" id="CHEBI:37565"/>
    </ligand>
</feature>